<feature type="chain" id="PRO_0000123855" description="Probable aspartate/prephenate aminotransferase">
    <location>
        <begin position="1"/>
        <end position="383"/>
    </location>
</feature>
<feature type="binding site" evidence="1">
    <location>
        <position position="39"/>
    </location>
    <ligand>
        <name>L-aspartate</name>
        <dbReference type="ChEBI" id="CHEBI:29991"/>
    </ligand>
</feature>
<feature type="binding site" evidence="2">
    <location>
        <position position="125"/>
    </location>
    <ligand>
        <name>L-aspartate</name>
        <dbReference type="ChEBI" id="CHEBI:29991"/>
    </ligand>
</feature>
<feature type="binding site" evidence="2">
    <location>
        <position position="175"/>
    </location>
    <ligand>
        <name>L-aspartate</name>
        <dbReference type="ChEBI" id="CHEBI:29991"/>
    </ligand>
</feature>
<feature type="binding site" evidence="2">
    <location>
        <position position="361"/>
    </location>
    <ligand>
        <name>L-aspartate</name>
        <dbReference type="ChEBI" id="CHEBI:29991"/>
    </ligand>
</feature>
<feature type="site" description="Important for prephenate aminotransferase activity" evidence="2">
    <location>
        <position position="12"/>
    </location>
</feature>
<feature type="modified residue" description="N6-(pyridoxal phosphate)lysine" evidence="2">
    <location>
        <position position="234"/>
    </location>
</feature>
<feature type="sequence conflict" description="In Ref. 2; AAB81842." evidence="3" ref="2">
    <original>A</original>
    <variation>V</variation>
    <location>
        <position position="18"/>
    </location>
</feature>
<feature type="sequence conflict" description="In Ref. 2; AAB81842." evidence="3" ref="2">
    <original>E</original>
    <variation>H</variation>
    <location>
        <position position="47"/>
    </location>
</feature>
<feature type="sequence conflict" description="In Ref. 2; AAB81842." evidence="3" ref="2">
    <original>AG</original>
    <variation>RA</variation>
    <location>
        <begin position="52"/>
        <end position="53"/>
    </location>
</feature>
<feature type="sequence conflict" description="In Ref. 2; AAB81842." evidence="3" ref="2">
    <original>A</original>
    <variation>G</variation>
    <location>
        <position position="56"/>
    </location>
</feature>
<feature type="sequence conflict" description="In Ref. 2; AAB81842." evidence="3" ref="2">
    <original>R</original>
    <variation>G</variation>
    <location>
        <position position="83"/>
    </location>
</feature>
<feature type="sequence conflict" description="In Ref. 2; AAB81842." evidence="3" ref="2">
    <original>LR</original>
    <variation>CE</variation>
    <location>
        <begin position="186"/>
        <end position="187"/>
    </location>
</feature>
<feature type="sequence conflict" description="In Ref. 2; AAB81842." evidence="3" ref="2">
    <original>GT</original>
    <variation>RH</variation>
    <location>
        <begin position="219"/>
        <end position="220"/>
    </location>
</feature>
<feature type="sequence conflict" description="In Ref. 2; AAB81842." evidence="3" ref="2">
    <original>NG</original>
    <variation>ER</variation>
    <location>
        <begin position="230"/>
        <end position="231"/>
    </location>
</feature>
<feature type="sequence conflict" description="In Ref. 2; AAB81842." evidence="3" ref="2">
    <original>K</original>
    <variation>N</variation>
    <location>
        <position position="234"/>
    </location>
</feature>
<feature type="sequence conflict" description="In Ref. 2; AAB81842." evidence="3" ref="2">
    <original>E</original>
    <variation>D</variation>
    <location>
        <position position="353"/>
    </location>
</feature>
<proteinExistence type="inferred from homology"/>
<protein>
    <recommendedName>
        <fullName evidence="2">Probable aspartate/prephenate aminotransferase</fullName>
        <shortName evidence="2">AspAT / PAT</shortName>
        <ecNumber evidence="2">2.6.1.1</ecNumber>
        <ecNumber evidence="2">2.6.1.78</ecNumber>
    </recommendedName>
    <alternativeName>
        <fullName>Transaminase A</fullName>
    </alternativeName>
</protein>
<evidence type="ECO:0000250" key="1">
    <source>
        <dbReference type="UniProtKB" id="P00509"/>
    </source>
</evidence>
<evidence type="ECO:0000250" key="2">
    <source>
        <dbReference type="UniProtKB" id="Q56232"/>
    </source>
</evidence>
<evidence type="ECO:0000305" key="3"/>
<comment type="function">
    <text evidence="2">Catalyzes the reversible conversion of aspartate and 2-oxoglutarate to glutamate and oxaloacetate. Can also transaminate prephenate in the presence of aspartate.</text>
</comment>
<comment type="catalytic activity">
    <reaction evidence="2">
        <text>L-aspartate + 2-oxoglutarate = oxaloacetate + L-glutamate</text>
        <dbReference type="Rhea" id="RHEA:21824"/>
        <dbReference type="ChEBI" id="CHEBI:16452"/>
        <dbReference type="ChEBI" id="CHEBI:16810"/>
        <dbReference type="ChEBI" id="CHEBI:29985"/>
        <dbReference type="ChEBI" id="CHEBI:29991"/>
        <dbReference type="EC" id="2.6.1.1"/>
    </reaction>
</comment>
<comment type="catalytic activity">
    <reaction evidence="2">
        <text>L-arogenate + oxaloacetate = prephenate + L-aspartate</text>
        <dbReference type="Rhea" id="RHEA:20445"/>
        <dbReference type="ChEBI" id="CHEBI:16452"/>
        <dbReference type="ChEBI" id="CHEBI:29934"/>
        <dbReference type="ChEBI" id="CHEBI:29991"/>
        <dbReference type="ChEBI" id="CHEBI:58180"/>
        <dbReference type="EC" id="2.6.1.78"/>
    </reaction>
</comment>
<comment type="cofactor">
    <cofactor evidence="2">
        <name>pyridoxal 5'-phosphate</name>
        <dbReference type="ChEBI" id="CHEBI:597326"/>
    </cofactor>
</comment>
<comment type="subunit">
    <text evidence="2">Homodimer.</text>
</comment>
<comment type="subcellular location">
    <subcellularLocation>
        <location evidence="2">Cytoplasm</location>
    </subcellularLocation>
</comment>
<comment type="similarity">
    <text evidence="3">Belongs to the class-I pyridoxal-phosphate-dependent aminotransferase family.</text>
</comment>
<keyword id="KW-0032">Aminotransferase</keyword>
<keyword id="KW-0963">Cytoplasm</keyword>
<keyword id="KW-0663">Pyridoxal phosphate</keyword>
<keyword id="KW-0808">Transferase</keyword>
<gene>
    <name type="primary">aspC</name>
</gene>
<organism>
    <name type="scientific">Thermus aquaticus</name>
    <dbReference type="NCBI Taxonomy" id="271"/>
    <lineage>
        <taxon>Bacteria</taxon>
        <taxon>Thermotogati</taxon>
        <taxon>Deinococcota</taxon>
        <taxon>Deinococci</taxon>
        <taxon>Thermales</taxon>
        <taxon>Thermaceae</taxon>
        <taxon>Thermus</taxon>
    </lineage>
</organism>
<reference key="1">
    <citation type="journal article" date="1997" name="Biochem. Biophys. Res. Commun.">
        <title>Cloning and sequencing of aspartate aminotransferase from Thermus aquaticus YT1.</title>
        <authorList>
            <person name="O'Farrell P."/>
            <person name="Sannia G."/>
            <person name="Walker J.M."/>
            <person name="Doonan S."/>
        </authorList>
    </citation>
    <scope>NUCLEOTIDE SEQUENCE [GENOMIC DNA]</scope>
    <source>
        <strain>ATCC 25104 / DSM 625 / JCM 10724 / NBRC 103206 / NCIMB 11243 / YT-1</strain>
    </source>
</reference>
<reference key="2">
    <citation type="submission" date="1997-09" db="EMBL/GenBank/DDBJ databases">
        <authorList>
            <person name="Benner E."/>
            <person name="Ramaley R.F."/>
        </authorList>
    </citation>
    <scope>NUCLEOTIDE SEQUENCE [GENOMIC DNA]</scope>
    <source>
        <strain>ATCC 25104 / DSM 625 / JCM 10724 / NBRC 103206 / NCIMB 11243 / YT-1</strain>
    </source>
</reference>
<name>AAPAT_THEAQ</name>
<dbReference type="EC" id="2.6.1.1" evidence="2"/>
<dbReference type="EC" id="2.6.1.78" evidence="2"/>
<dbReference type="EMBL" id="X99521">
    <property type="protein sequence ID" value="CAA67877.1"/>
    <property type="molecule type" value="Genomic_DNA"/>
</dbReference>
<dbReference type="EMBL" id="AF025665">
    <property type="protein sequence ID" value="AAB81842.1"/>
    <property type="molecule type" value="Genomic_DNA"/>
</dbReference>
<dbReference type="PIR" id="JC5775">
    <property type="entry name" value="JC5775"/>
</dbReference>
<dbReference type="SMR" id="O33822"/>
<dbReference type="GO" id="GO:0005737">
    <property type="term" value="C:cytoplasm"/>
    <property type="evidence" value="ECO:0007669"/>
    <property type="project" value="UniProtKB-SubCell"/>
</dbReference>
<dbReference type="GO" id="GO:0033853">
    <property type="term" value="F:aspartate-prephenate aminotransferase activity"/>
    <property type="evidence" value="ECO:0007669"/>
    <property type="project" value="UniProtKB-EC"/>
</dbReference>
<dbReference type="GO" id="GO:0004069">
    <property type="term" value="F:L-aspartate:2-oxoglutarate aminotransferase activity"/>
    <property type="evidence" value="ECO:0007669"/>
    <property type="project" value="UniProtKB-EC"/>
</dbReference>
<dbReference type="GO" id="GO:0030170">
    <property type="term" value="F:pyridoxal phosphate binding"/>
    <property type="evidence" value="ECO:0007669"/>
    <property type="project" value="InterPro"/>
</dbReference>
<dbReference type="GO" id="GO:0006520">
    <property type="term" value="P:amino acid metabolic process"/>
    <property type="evidence" value="ECO:0007669"/>
    <property type="project" value="InterPro"/>
</dbReference>
<dbReference type="GO" id="GO:0009058">
    <property type="term" value="P:biosynthetic process"/>
    <property type="evidence" value="ECO:0007669"/>
    <property type="project" value="InterPro"/>
</dbReference>
<dbReference type="CDD" id="cd00609">
    <property type="entry name" value="AAT_like"/>
    <property type="match status" value="1"/>
</dbReference>
<dbReference type="FunFam" id="3.40.640.10:FF:000033">
    <property type="entry name" value="Aspartate aminotransferase"/>
    <property type="match status" value="1"/>
</dbReference>
<dbReference type="Gene3D" id="3.90.1150.10">
    <property type="entry name" value="Aspartate Aminotransferase, domain 1"/>
    <property type="match status" value="1"/>
</dbReference>
<dbReference type="Gene3D" id="3.40.640.10">
    <property type="entry name" value="Type I PLP-dependent aspartate aminotransferase-like (Major domain)"/>
    <property type="match status" value="1"/>
</dbReference>
<dbReference type="InterPro" id="IPR004839">
    <property type="entry name" value="Aminotransferase_I/II_large"/>
</dbReference>
<dbReference type="InterPro" id="IPR050596">
    <property type="entry name" value="AspAT/PAT-like"/>
</dbReference>
<dbReference type="InterPro" id="IPR004838">
    <property type="entry name" value="NHTrfase_class1_PyrdxlP-BS"/>
</dbReference>
<dbReference type="InterPro" id="IPR015424">
    <property type="entry name" value="PyrdxlP-dep_Trfase"/>
</dbReference>
<dbReference type="InterPro" id="IPR015421">
    <property type="entry name" value="PyrdxlP-dep_Trfase_major"/>
</dbReference>
<dbReference type="InterPro" id="IPR015422">
    <property type="entry name" value="PyrdxlP-dep_Trfase_small"/>
</dbReference>
<dbReference type="PANTHER" id="PTHR46383">
    <property type="entry name" value="ASPARTATE AMINOTRANSFERASE"/>
    <property type="match status" value="1"/>
</dbReference>
<dbReference type="PANTHER" id="PTHR46383:SF1">
    <property type="entry name" value="ASPARTATE AMINOTRANSFERASE"/>
    <property type="match status" value="1"/>
</dbReference>
<dbReference type="Pfam" id="PF00155">
    <property type="entry name" value="Aminotran_1_2"/>
    <property type="match status" value="1"/>
</dbReference>
<dbReference type="SUPFAM" id="SSF53383">
    <property type="entry name" value="PLP-dependent transferases"/>
    <property type="match status" value="1"/>
</dbReference>
<dbReference type="PROSITE" id="PS00105">
    <property type="entry name" value="AA_TRANSFER_CLASS_1"/>
    <property type="match status" value="1"/>
</dbReference>
<accession>O33822</accession>
<accession>O31028</accession>
<sequence length="383" mass="41717">MRGLSQRVKSMKPSATVAVNARALELRRKGVDLVALTAGEPDFDTPEHVKEAGRRALAQGKTKYAPPAGIPELREAVAEKFRRENGLEVTPEETIVTVGGKQALFNLFQAILDPGDEVIVLAPYWVSYPEMVRFAGGVPVEVPTLPEEGFVPDPERVRRAITPRTKALVVNSPNNPTGVVYPEEVLRALAEMALQHDFYLVSDEIYEHLIYEGAHFSPGTLAPEHTITVNGAAKAFAMTGWRIGYACGPKAVIKAMADVSSQSTTSPDTIAQWATLEALTNREASMAFIAMAREAYRKRRDLLLEGLSRIGLEAVRPSGAFYVLMDTSPFAPNEVEAAERLLMAGVAVVPGTEFAAFGHVRLSYATGEENLKKALERFAQALQ</sequence>